<keyword id="KW-0963">Cytoplasm</keyword>
<keyword id="KW-0274">FAD</keyword>
<keyword id="KW-0285">Flavoprotein</keyword>
<keyword id="KW-0520">NAD</keyword>
<keyword id="KW-0819">tRNA processing</keyword>
<comment type="function">
    <text evidence="1">NAD-binding protein involved in the addition of a carboxymethylaminomethyl (cmnm) group at the wobble position (U34) of certain tRNAs, forming tRNA-cmnm(5)s(2)U34.</text>
</comment>
<comment type="cofactor">
    <cofactor evidence="1">
        <name>FAD</name>
        <dbReference type="ChEBI" id="CHEBI:57692"/>
    </cofactor>
</comment>
<comment type="subunit">
    <text evidence="1">Homodimer. Heterotetramer of two MnmE and two MnmG subunits.</text>
</comment>
<comment type="subcellular location">
    <subcellularLocation>
        <location evidence="1">Cytoplasm</location>
    </subcellularLocation>
</comment>
<comment type="similarity">
    <text evidence="1">Belongs to the MnmG family.</text>
</comment>
<accession>A2S6L0</accession>
<reference key="1">
    <citation type="journal article" date="2010" name="Genome Biol. Evol.">
        <title>Continuing evolution of Burkholderia mallei through genome reduction and large-scale rearrangements.</title>
        <authorList>
            <person name="Losada L."/>
            <person name="Ronning C.M."/>
            <person name="DeShazer D."/>
            <person name="Woods D."/>
            <person name="Fedorova N."/>
            <person name="Kim H.S."/>
            <person name="Shabalina S.A."/>
            <person name="Pearson T.R."/>
            <person name="Brinkac L."/>
            <person name="Tan P."/>
            <person name="Nandi T."/>
            <person name="Crabtree J."/>
            <person name="Badger J."/>
            <person name="Beckstrom-Sternberg S."/>
            <person name="Saqib M."/>
            <person name="Schutzer S.E."/>
            <person name="Keim P."/>
            <person name="Nierman W.C."/>
        </authorList>
    </citation>
    <scope>NUCLEOTIDE SEQUENCE [LARGE SCALE GENOMIC DNA]</scope>
    <source>
        <strain>NCTC 10229</strain>
    </source>
</reference>
<protein>
    <recommendedName>
        <fullName evidence="1">tRNA uridine 5-carboxymethylaminomethyl modification enzyme MnmG</fullName>
    </recommendedName>
    <alternativeName>
        <fullName evidence="1">Glucose-inhibited division protein A</fullName>
    </alternativeName>
</protein>
<feature type="chain" id="PRO_1000016564" description="tRNA uridine 5-carboxymethylaminomethyl modification enzyme MnmG">
    <location>
        <begin position="1"/>
        <end position="657"/>
    </location>
</feature>
<feature type="region of interest" description="Disordered" evidence="2">
    <location>
        <begin position="636"/>
        <end position="657"/>
    </location>
</feature>
<feature type="binding site" evidence="1">
    <location>
        <begin position="13"/>
        <end position="18"/>
    </location>
    <ligand>
        <name>FAD</name>
        <dbReference type="ChEBI" id="CHEBI:57692"/>
    </ligand>
</feature>
<feature type="binding site" evidence="1">
    <location>
        <begin position="274"/>
        <end position="288"/>
    </location>
    <ligand>
        <name>NAD(+)</name>
        <dbReference type="ChEBI" id="CHEBI:57540"/>
    </ligand>
</feature>
<dbReference type="EMBL" id="CP000546">
    <property type="protein sequence ID" value="ABN02486.1"/>
    <property type="molecule type" value="Genomic_DNA"/>
</dbReference>
<dbReference type="RefSeq" id="WP_004195816.1">
    <property type="nucleotide sequence ID" value="NC_008836.1"/>
</dbReference>
<dbReference type="SMR" id="A2S6L0"/>
<dbReference type="GeneID" id="93062036"/>
<dbReference type="KEGG" id="bml:BMA10229_A1599"/>
<dbReference type="HOGENOM" id="CLU_007831_2_2_4"/>
<dbReference type="Proteomes" id="UP000002283">
    <property type="component" value="Chromosome I"/>
</dbReference>
<dbReference type="GO" id="GO:0005829">
    <property type="term" value="C:cytosol"/>
    <property type="evidence" value="ECO:0007669"/>
    <property type="project" value="TreeGrafter"/>
</dbReference>
<dbReference type="GO" id="GO:0050660">
    <property type="term" value="F:flavin adenine dinucleotide binding"/>
    <property type="evidence" value="ECO:0007669"/>
    <property type="project" value="UniProtKB-UniRule"/>
</dbReference>
<dbReference type="GO" id="GO:0030488">
    <property type="term" value="P:tRNA methylation"/>
    <property type="evidence" value="ECO:0007669"/>
    <property type="project" value="TreeGrafter"/>
</dbReference>
<dbReference type="GO" id="GO:0002098">
    <property type="term" value="P:tRNA wobble uridine modification"/>
    <property type="evidence" value="ECO:0007669"/>
    <property type="project" value="InterPro"/>
</dbReference>
<dbReference type="FunFam" id="1.10.10.1800:FF:000001">
    <property type="entry name" value="tRNA uridine 5-carboxymethylaminomethyl modification enzyme MnmG"/>
    <property type="match status" value="1"/>
</dbReference>
<dbReference type="FunFam" id="1.10.150.570:FF:000001">
    <property type="entry name" value="tRNA uridine 5-carboxymethylaminomethyl modification enzyme MnmG"/>
    <property type="match status" value="1"/>
</dbReference>
<dbReference type="FunFam" id="3.50.50.60:FF:000002">
    <property type="entry name" value="tRNA uridine 5-carboxymethylaminomethyl modification enzyme MnmG"/>
    <property type="match status" value="1"/>
</dbReference>
<dbReference type="FunFam" id="3.50.50.60:FF:000010">
    <property type="entry name" value="tRNA uridine 5-carboxymethylaminomethyl modification enzyme MnmG"/>
    <property type="match status" value="1"/>
</dbReference>
<dbReference type="Gene3D" id="3.50.50.60">
    <property type="entry name" value="FAD/NAD(P)-binding domain"/>
    <property type="match status" value="2"/>
</dbReference>
<dbReference type="Gene3D" id="1.10.150.570">
    <property type="entry name" value="GidA associated domain, C-terminal subdomain"/>
    <property type="match status" value="1"/>
</dbReference>
<dbReference type="Gene3D" id="1.10.10.1800">
    <property type="entry name" value="tRNA uridine 5-carboxymethylaminomethyl modification enzyme MnmG/GidA"/>
    <property type="match status" value="1"/>
</dbReference>
<dbReference type="HAMAP" id="MF_00129">
    <property type="entry name" value="MnmG_GidA"/>
    <property type="match status" value="1"/>
</dbReference>
<dbReference type="InterPro" id="IPR036188">
    <property type="entry name" value="FAD/NAD-bd_sf"/>
</dbReference>
<dbReference type="InterPro" id="IPR049312">
    <property type="entry name" value="GIDA_C_N"/>
</dbReference>
<dbReference type="InterPro" id="IPR004416">
    <property type="entry name" value="MnmG"/>
</dbReference>
<dbReference type="InterPro" id="IPR002218">
    <property type="entry name" value="MnmG-rel"/>
</dbReference>
<dbReference type="InterPro" id="IPR020595">
    <property type="entry name" value="MnmG-rel_CS"/>
</dbReference>
<dbReference type="InterPro" id="IPR026904">
    <property type="entry name" value="MnmG_C"/>
</dbReference>
<dbReference type="InterPro" id="IPR047001">
    <property type="entry name" value="MnmG_C_subdom"/>
</dbReference>
<dbReference type="InterPro" id="IPR044920">
    <property type="entry name" value="MnmG_C_subdom_sf"/>
</dbReference>
<dbReference type="InterPro" id="IPR040131">
    <property type="entry name" value="MnmG_N"/>
</dbReference>
<dbReference type="NCBIfam" id="TIGR00136">
    <property type="entry name" value="mnmG_gidA"/>
    <property type="match status" value="1"/>
</dbReference>
<dbReference type="PANTHER" id="PTHR11806">
    <property type="entry name" value="GLUCOSE INHIBITED DIVISION PROTEIN A"/>
    <property type="match status" value="1"/>
</dbReference>
<dbReference type="PANTHER" id="PTHR11806:SF0">
    <property type="entry name" value="PROTEIN MTO1 HOMOLOG, MITOCHONDRIAL"/>
    <property type="match status" value="1"/>
</dbReference>
<dbReference type="Pfam" id="PF01134">
    <property type="entry name" value="GIDA"/>
    <property type="match status" value="1"/>
</dbReference>
<dbReference type="Pfam" id="PF21680">
    <property type="entry name" value="GIDA_C_1st"/>
    <property type="match status" value="1"/>
</dbReference>
<dbReference type="Pfam" id="PF13932">
    <property type="entry name" value="SAM_GIDA_C"/>
    <property type="match status" value="1"/>
</dbReference>
<dbReference type="SMART" id="SM01228">
    <property type="entry name" value="GIDA_assoc_3"/>
    <property type="match status" value="1"/>
</dbReference>
<dbReference type="SUPFAM" id="SSF51905">
    <property type="entry name" value="FAD/NAD(P)-binding domain"/>
    <property type="match status" value="1"/>
</dbReference>
<dbReference type="PROSITE" id="PS01280">
    <property type="entry name" value="GIDA_1"/>
    <property type="match status" value="1"/>
</dbReference>
<dbReference type="PROSITE" id="PS01281">
    <property type="entry name" value="GIDA_2"/>
    <property type="match status" value="1"/>
</dbReference>
<name>MNMG_BURM9</name>
<sequence>MLYPTEFDVIVVGGGHAGTEAALASARMGAKTLLLTHNIETLGQMSCNPSIGGIGKGHLVKEVDALGGAMAAATDEGGIQFRILNSSKGPAVRATRAQADRVLYKQAIRRRLENQPNLWLFQQAVDDLMVEGDRVVGAVTQVGVRFRARAVVLTAGTFLDGKIHVGLNHYTGGRAGDPAAVSLSSRLKELNLPQGRLKTGTPPRIDGRTIDFSKLDEQPGDLDPIPVFSFLGRAEQHPQQLPCWVTHTNERTHDIIRSGLDRSPMYTGVIEGVGPRYCPSIEDKIHRFASKDSHQIFLEPEGLTTNEFYPNGISTSLPFDVQLALVHSMRGLEQAHILRPGYAIEYDYFDPRALKSSLETKAIGGLFFAGQINGTTGYEEAAAQGLLAGINAGRYAQEKDAWCPRRDQAYLGVLVDDLVTRGVSEPYRMFTSRAEYRLSLREDNADMRLTEIGRELGVVDDVRWDAFNRKRDAVSRETERLRTTWVTPKTLPADEATALLGKPIDHEYSLAELLRRPGVSYDGVCGLRGGECGPSEPLAEDELLLAQIKEQIEIGIKYQGYIERQAGEIERNGANENTRLPDGIDYTEVRGLSFEVSQKLNQFRPETIGQASRISGMTPAAISLLMVHLKKRGLGRRKGADSVPGADVQADNTAAQQ</sequence>
<organism>
    <name type="scientific">Burkholderia mallei (strain NCTC 10229)</name>
    <dbReference type="NCBI Taxonomy" id="412022"/>
    <lineage>
        <taxon>Bacteria</taxon>
        <taxon>Pseudomonadati</taxon>
        <taxon>Pseudomonadota</taxon>
        <taxon>Betaproteobacteria</taxon>
        <taxon>Burkholderiales</taxon>
        <taxon>Burkholderiaceae</taxon>
        <taxon>Burkholderia</taxon>
        <taxon>pseudomallei group</taxon>
    </lineage>
</organism>
<gene>
    <name evidence="1" type="primary">mnmG</name>
    <name evidence="1" type="synonym">gidA</name>
    <name type="ordered locus">BMA10229_A1599</name>
</gene>
<proteinExistence type="inferred from homology"/>
<evidence type="ECO:0000255" key="1">
    <source>
        <dbReference type="HAMAP-Rule" id="MF_00129"/>
    </source>
</evidence>
<evidence type="ECO:0000256" key="2">
    <source>
        <dbReference type="SAM" id="MobiDB-lite"/>
    </source>
</evidence>